<keyword id="KW-0963">Cytoplasm</keyword>
<keyword id="KW-0479">Metal-binding</keyword>
<keyword id="KW-0520">NAD</keyword>
<keyword id="KW-0560">Oxidoreductase</keyword>
<keyword id="KW-0862">Zinc</keyword>
<comment type="function">
    <text evidence="1">Catalyzes the NAD(+)-dependent oxidation of L-threonine to 2-amino-3-ketobutyrate.</text>
</comment>
<comment type="catalytic activity">
    <reaction evidence="1">
        <text>L-threonine + NAD(+) = (2S)-2-amino-3-oxobutanoate + NADH + H(+)</text>
        <dbReference type="Rhea" id="RHEA:13161"/>
        <dbReference type="ChEBI" id="CHEBI:15378"/>
        <dbReference type="ChEBI" id="CHEBI:57540"/>
        <dbReference type="ChEBI" id="CHEBI:57926"/>
        <dbReference type="ChEBI" id="CHEBI:57945"/>
        <dbReference type="ChEBI" id="CHEBI:78948"/>
        <dbReference type="EC" id="1.1.1.103"/>
    </reaction>
</comment>
<comment type="cofactor">
    <cofactor evidence="1">
        <name>Zn(2+)</name>
        <dbReference type="ChEBI" id="CHEBI:29105"/>
    </cofactor>
    <text evidence="1">Binds 2 Zn(2+) ions per subunit.</text>
</comment>
<comment type="pathway">
    <text evidence="1">Amino-acid degradation; L-threonine degradation via oxydo-reductase pathway; glycine from L-threonine: step 1/2.</text>
</comment>
<comment type="subunit">
    <text evidence="1">Homotetramer.</text>
</comment>
<comment type="subcellular location">
    <subcellularLocation>
        <location evidence="1">Cytoplasm</location>
    </subcellularLocation>
</comment>
<comment type="similarity">
    <text evidence="1">Belongs to the zinc-containing alcohol dehydrogenase family.</text>
</comment>
<reference key="1">
    <citation type="journal article" date="2011" name="J. Bacteriol.">
        <title>Comparative genomics of 28 Salmonella enterica isolates: evidence for CRISPR-mediated adaptive sublineage evolution.</title>
        <authorList>
            <person name="Fricke W.F."/>
            <person name="Mammel M.K."/>
            <person name="McDermott P.F."/>
            <person name="Tartera C."/>
            <person name="White D.G."/>
            <person name="Leclerc J.E."/>
            <person name="Ravel J."/>
            <person name="Cebula T.A."/>
        </authorList>
    </citation>
    <scope>NUCLEOTIDE SEQUENCE [LARGE SCALE GENOMIC DNA]</scope>
    <source>
        <strain>SL476</strain>
    </source>
</reference>
<feature type="chain" id="PRO_1000130562" description="L-threonine 3-dehydrogenase">
    <location>
        <begin position="1"/>
        <end position="341"/>
    </location>
</feature>
<feature type="active site" description="Charge relay system" evidence="1">
    <location>
        <position position="40"/>
    </location>
</feature>
<feature type="active site" description="Charge relay system" evidence="1">
    <location>
        <position position="43"/>
    </location>
</feature>
<feature type="binding site" evidence="1">
    <location>
        <position position="38"/>
    </location>
    <ligand>
        <name>Zn(2+)</name>
        <dbReference type="ChEBI" id="CHEBI:29105"/>
        <label>1</label>
        <note>catalytic</note>
    </ligand>
</feature>
<feature type="binding site" evidence="1">
    <location>
        <position position="63"/>
    </location>
    <ligand>
        <name>Zn(2+)</name>
        <dbReference type="ChEBI" id="CHEBI:29105"/>
        <label>1</label>
        <note>catalytic</note>
    </ligand>
</feature>
<feature type="binding site" evidence="1">
    <location>
        <position position="64"/>
    </location>
    <ligand>
        <name>Zn(2+)</name>
        <dbReference type="ChEBI" id="CHEBI:29105"/>
        <label>1</label>
        <note>catalytic</note>
    </ligand>
</feature>
<feature type="binding site" evidence="1">
    <location>
        <position position="93"/>
    </location>
    <ligand>
        <name>Zn(2+)</name>
        <dbReference type="ChEBI" id="CHEBI:29105"/>
        <label>2</label>
    </ligand>
</feature>
<feature type="binding site" evidence="1">
    <location>
        <position position="96"/>
    </location>
    <ligand>
        <name>Zn(2+)</name>
        <dbReference type="ChEBI" id="CHEBI:29105"/>
        <label>2</label>
    </ligand>
</feature>
<feature type="binding site" evidence="1">
    <location>
        <position position="99"/>
    </location>
    <ligand>
        <name>Zn(2+)</name>
        <dbReference type="ChEBI" id="CHEBI:29105"/>
        <label>2</label>
    </ligand>
</feature>
<feature type="binding site" evidence="1">
    <location>
        <position position="107"/>
    </location>
    <ligand>
        <name>Zn(2+)</name>
        <dbReference type="ChEBI" id="CHEBI:29105"/>
        <label>2</label>
    </ligand>
</feature>
<feature type="binding site" evidence="1">
    <location>
        <position position="175"/>
    </location>
    <ligand>
        <name>NAD(+)</name>
        <dbReference type="ChEBI" id="CHEBI:57540"/>
    </ligand>
</feature>
<feature type="binding site" evidence="1">
    <location>
        <position position="195"/>
    </location>
    <ligand>
        <name>NAD(+)</name>
        <dbReference type="ChEBI" id="CHEBI:57540"/>
    </ligand>
</feature>
<feature type="binding site" evidence="1">
    <location>
        <position position="200"/>
    </location>
    <ligand>
        <name>NAD(+)</name>
        <dbReference type="ChEBI" id="CHEBI:57540"/>
    </ligand>
</feature>
<feature type="binding site" evidence="1">
    <location>
        <begin position="262"/>
        <end position="264"/>
    </location>
    <ligand>
        <name>NAD(+)</name>
        <dbReference type="ChEBI" id="CHEBI:57540"/>
    </ligand>
</feature>
<feature type="binding site" evidence="1">
    <location>
        <begin position="286"/>
        <end position="287"/>
    </location>
    <ligand>
        <name>NAD(+)</name>
        <dbReference type="ChEBI" id="CHEBI:57540"/>
    </ligand>
</feature>
<feature type="site" description="Important for catalytic activity for the proton relay mechanism but does not participate directly in the coordination of zinc atom" evidence="1">
    <location>
        <position position="148"/>
    </location>
</feature>
<evidence type="ECO:0000255" key="1">
    <source>
        <dbReference type="HAMAP-Rule" id="MF_00627"/>
    </source>
</evidence>
<dbReference type="EC" id="1.1.1.103" evidence="1"/>
<dbReference type="EMBL" id="CP001120">
    <property type="protein sequence ID" value="ACF66357.1"/>
    <property type="molecule type" value="Genomic_DNA"/>
</dbReference>
<dbReference type="RefSeq" id="WP_000645990.1">
    <property type="nucleotide sequence ID" value="NC_011083.1"/>
</dbReference>
<dbReference type="SMR" id="B4T9A1"/>
<dbReference type="KEGG" id="seh:SeHA_C4033"/>
<dbReference type="HOGENOM" id="CLU_026673_11_0_6"/>
<dbReference type="UniPathway" id="UPA00046">
    <property type="reaction ID" value="UER00505"/>
</dbReference>
<dbReference type="Proteomes" id="UP000001866">
    <property type="component" value="Chromosome"/>
</dbReference>
<dbReference type="GO" id="GO:0005737">
    <property type="term" value="C:cytoplasm"/>
    <property type="evidence" value="ECO:0007669"/>
    <property type="project" value="UniProtKB-SubCell"/>
</dbReference>
<dbReference type="GO" id="GO:0008743">
    <property type="term" value="F:L-threonine 3-dehydrogenase activity"/>
    <property type="evidence" value="ECO:0007669"/>
    <property type="project" value="UniProtKB-UniRule"/>
</dbReference>
<dbReference type="GO" id="GO:0008270">
    <property type="term" value="F:zinc ion binding"/>
    <property type="evidence" value="ECO:0007669"/>
    <property type="project" value="UniProtKB-UniRule"/>
</dbReference>
<dbReference type="GO" id="GO:0019518">
    <property type="term" value="P:L-threonine catabolic process to glycine"/>
    <property type="evidence" value="ECO:0007669"/>
    <property type="project" value="UniProtKB-UniPathway"/>
</dbReference>
<dbReference type="FunFam" id="3.40.50.720:FF:000059">
    <property type="entry name" value="L-threonine 3-dehydrogenase"/>
    <property type="match status" value="1"/>
</dbReference>
<dbReference type="Gene3D" id="3.90.180.10">
    <property type="entry name" value="Medium-chain alcohol dehydrogenases, catalytic domain"/>
    <property type="match status" value="1"/>
</dbReference>
<dbReference type="Gene3D" id="3.40.50.720">
    <property type="entry name" value="NAD(P)-binding Rossmann-like Domain"/>
    <property type="match status" value="1"/>
</dbReference>
<dbReference type="HAMAP" id="MF_00627">
    <property type="entry name" value="Thr_dehydrog"/>
    <property type="match status" value="1"/>
</dbReference>
<dbReference type="InterPro" id="IPR013149">
    <property type="entry name" value="ADH-like_C"/>
</dbReference>
<dbReference type="InterPro" id="IPR013154">
    <property type="entry name" value="ADH-like_N"/>
</dbReference>
<dbReference type="InterPro" id="IPR002328">
    <property type="entry name" value="ADH_Zn_CS"/>
</dbReference>
<dbReference type="InterPro" id="IPR011032">
    <property type="entry name" value="GroES-like_sf"/>
</dbReference>
<dbReference type="InterPro" id="IPR004627">
    <property type="entry name" value="L-Threonine_3-DHase"/>
</dbReference>
<dbReference type="InterPro" id="IPR036291">
    <property type="entry name" value="NAD(P)-bd_dom_sf"/>
</dbReference>
<dbReference type="InterPro" id="IPR020843">
    <property type="entry name" value="PKS_ER"/>
</dbReference>
<dbReference type="InterPro" id="IPR050129">
    <property type="entry name" value="Zn_alcohol_dh"/>
</dbReference>
<dbReference type="NCBIfam" id="NF003808">
    <property type="entry name" value="PRK05396.1"/>
    <property type="match status" value="1"/>
</dbReference>
<dbReference type="NCBIfam" id="TIGR00692">
    <property type="entry name" value="tdh"/>
    <property type="match status" value="1"/>
</dbReference>
<dbReference type="PANTHER" id="PTHR43401">
    <property type="entry name" value="L-THREONINE 3-DEHYDROGENASE"/>
    <property type="match status" value="1"/>
</dbReference>
<dbReference type="PANTHER" id="PTHR43401:SF2">
    <property type="entry name" value="L-THREONINE 3-DEHYDROGENASE"/>
    <property type="match status" value="1"/>
</dbReference>
<dbReference type="Pfam" id="PF08240">
    <property type="entry name" value="ADH_N"/>
    <property type="match status" value="1"/>
</dbReference>
<dbReference type="Pfam" id="PF00107">
    <property type="entry name" value="ADH_zinc_N"/>
    <property type="match status" value="1"/>
</dbReference>
<dbReference type="SMART" id="SM00829">
    <property type="entry name" value="PKS_ER"/>
    <property type="match status" value="1"/>
</dbReference>
<dbReference type="SUPFAM" id="SSF50129">
    <property type="entry name" value="GroES-like"/>
    <property type="match status" value="1"/>
</dbReference>
<dbReference type="SUPFAM" id="SSF51735">
    <property type="entry name" value="NAD(P)-binding Rossmann-fold domains"/>
    <property type="match status" value="1"/>
</dbReference>
<dbReference type="PROSITE" id="PS00059">
    <property type="entry name" value="ADH_ZINC"/>
    <property type="match status" value="1"/>
</dbReference>
<organism>
    <name type="scientific">Salmonella heidelberg (strain SL476)</name>
    <dbReference type="NCBI Taxonomy" id="454169"/>
    <lineage>
        <taxon>Bacteria</taxon>
        <taxon>Pseudomonadati</taxon>
        <taxon>Pseudomonadota</taxon>
        <taxon>Gammaproteobacteria</taxon>
        <taxon>Enterobacterales</taxon>
        <taxon>Enterobacteriaceae</taxon>
        <taxon>Salmonella</taxon>
    </lineage>
</organism>
<sequence>MKALSKLKAEEGIWMTDVPEPEVGHNDLLIKIRKTAICGTDVHIYNWDDWSQKTIPVPMVVGHEYVGEVVGIGQEVKGFKIGDRVSGEGHITCGHCRNCRGGRTHLCRNTTGVGVNRPGCFAEYLVIPAFNAFKIPDNISDDLASIFDPFGNAVHTALSFDLVGEDVLVSGAGPIGVMAAAVAKHVGARHVVITDVNEYRLELARKMGVTRAVNVAKESLNDVMAELGMTEGFDVGLEMSGAPPAFRTMLDTMNHGGRIAMLGIPPSDMSIDWTKVIFKGLFIKGIYGREMFETWYKMAALIQSGLDLSPIITHRFSIDDFQKGFDAMRSGQSGKVILSWD</sequence>
<accession>B4T9A1</accession>
<gene>
    <name evidence="1" type="primary">tdh</name>
    <name type="ordered locus">SeHA_C4033</name>
</gene>
<protein>
    <recommendedName>
        <fullName evidence="1">L-threonine 3-dehydrogenase</fullName>
        <shortName evidence="1">TDH</shortName>
        <ecNumber evidence="1">1.1.1.103</ecNumber>
    </recommendedName>
</protein>
<name>TDH_SALHS</name>
<proteinExistence type="inferred from homology"/>